<feature type="chain" id="PRO_0000221010" description="Ubiquitin thioesterase OTUB2">
    <location>
        <begin position="1"/>
        <end position="234"/>
    </location>
</feature>
<feature type="domain" description="OTU" evidence="1">
    <location>
        <begin position="40"/>
        <end position="231"/>
    </location>
</feature>
<feature type="active site" evidence="9">
    <location>
        <position position="48"/>
    </location>
</feature>
<feature type="active site" description="Nucleophile" evidence="8 9">
    <location>
        <position position="51"/>
    </location>
</feature>
<feature type="active site" evidence="9">
    <location>
        <position position="224"/>
    </location>
</feature>
<feature type="site" description="Required to orient and stabilize the active site H-224" evidence="9">
    <location>
        <position position="226"/>
    </location>
</feature>
<feature type="splice variant" id="VSP_009465" description="In isoform 2." evidence="6">
    <location>
        <begin position="74"/>
        <end position="234"/>
    </location>
</feature>
<feature type="mutagenesis site" description="Affects its ability to cleave 'K63'-linked ubiquitin." evidence="4">
    <original>G</original>
    <variation>P</variation>
    <location>
        <position position="47"/>
    </location>
</feature>
<feature type="mutagenesis site" description="Loss of function in vitro." evidence="2">
    <original>C</original>
    <variation>S</variation>
    <location>
        <position position="51"/>
    </location>
</feature>
<feature type="mutagenesis site" description="Abolishes deubiquitinase activity." evidence="3">
    <original>N</original>
    <variation>A</variation>
    <location>
        <position position="226"/>
    </location>
</feature>
<feature type="strand" evidence="11">
    <location>
        <begin position="8"/>
        <end position="14"/>
    </location>
</feature>
<feature type="helix" evidence="12">
    <location>
        <begin position="15"/>
        <end position="21"/>
    </location>
</feature>
<feature type="helix" evidence="12">
    <location>
        <begin position="26"/>
        <end position="35"/>
    </location>
</feature>
<feature type="turn" evidence="12">
    <location>
        <begin position="36"/>
        <end position="38"/>
    </location>
</feature>
<feature type="strand" evidence="12">
    <location>
        <begin position="41"/>
        <end position="43"/>
    </location>
</feature>
<feature type="strand" evidence="10">
    <location>
        <begin position="47"/>
        <end position="49"/>
    </location>
</feature>
<feature type="helix" evidence="12">
    <location>
        <begin position="51"/>
        <end position="64"/>
    </location>
</feature>
<feature type="helix" evidence="12">
    <location>
        <begin position="68"/>
        <end position="87"/>
    </location>
</feature>
<feature type="helix" evidence="12">
    <location>
        <begin position="92"/>
        <end position="111"/>
    </location>
</feature>
<feature type="helix" evidence="12">
    <location>
        <begin position="115"/>
        <end position="123"/>
    </location>
</feature>
<feature type="helix" evidence="12">
    <location>
        <begin position="125"/>
        <end position="145"/>
    </location>
</feature>
<feature type="helix" evidence="12">
    <location>
        <begin position="147"/>
        <end position="153"/>
    </location>
</feature>
<feature type="turn" evidence="11">
    <location>
        <begin position="154"/>
        <end position="157"/>
    </location>
</feature>
<feature type="helix" evidence="12">
    <location>
        <begin position="160"/>
        <end position="167"/>
    </location>
</feature>
<feature type="helix" evidence="12">
    <location>
        <begin position="177"/>
        <end position="187"/>
    </location>
</feature>
<feature type="strand" evidence="12">
    <location>
        <begin position="191"/>
        <end position="195"/>
    </location>
</feature>
<feature type="strand" evidence="12">
    <location>
        <begin position="198"/>
        <end position="201"/>
    </location>
</feature>
<feature type="strand" evidence="12">
    <location>
        <begin position="204"/>
        <end position="209"/>
    </location>
</feature>
<feature type="strand" evidence="12">
    <location>
        <begin position="215"/>
        <end position="220"/>
    </location>
</feature>
<feature type="strand" evidence="12">
    <location>
        <begin position="225"/>
        <end position="229"/>
    </location>
</feature>
<protein>
    <recommendedName>
        <fullName>Ubiquitin thioesterase OTUB2</fullName>
        <ecNumber evidence="5">3.4.19.12</ecNumber>
    </recommendedName>
    <alternativeName>
        <fullName>Deubiquitinating enzyme OTUB2</fullName>
    </alternativeName>
    <alternativeName>
        <fullName>OTU domain-containing ubiquitin aldehyde-binding protein 2</fullName>
    </alternativeName>
    <alternativeName>
        <fullName>Otubain-2</fullName>
    </alternativeName>
    <alternativeName>
        <fullName>Ubiquitin-specific-processing protease OTUB2</fullName>
    </alternativeName>
</protein>
<evidence type="ECO:0000255" key="1">
    <source>
        <dbReference type="PROSITE-ProRule" id="PRU00139"/>
    </source>
</evidence>
<evidence type="ECO:0000269" key="2">
    <source>
    </source>
</evidence>
<evidence type="ECO:0000269" key="3">
    <source>
    </source>
</evidence>
<evidence type="ECO:0000269" key="4">
    <source>
    </source>
</evidence>
<evidence type="ECO:0000269" key="5">
    <source>
    </source>
</evidence>
<evidence type="ECO:0000303" key="6">
    <source>
    </source>
</evidence>
<evidence type="ECO:0000305" key="7"/>
<evidence type="ECO:0000305" key="8">
    <source>
    </source>
</evidence>
<evidence type="ECO:0000305" key="9">
    <source>
    </source>
</evidence>
<evidence type="ECO:0007829" key="10">
    <source>
        <dbReference type="PDB" id="4FJV"/>
    </source>
</evidence>
<evidence type="ECO:0007829" key="11">
    <source>
        <dbReference type="PDB" id="5QIQ"/>
    </source>
</evidence>
<evidence type="ECO:0007829" key="12">
    <source>
        <dbReference type="PDB" id="5QIV"/>
    </source>
</evidence>
<organism>
    <name type="scientific">Homo sapiens</name>
    <name type="common">Human</name>
    <dbReference type="NCBI Taxonomy" id="9606"/>
    <lineage>
        <taxon>Eukaryota</taxon>
        <taxon>Metazoa</taxon>
        <taxon>Chordata</taxon>
        <taxon>Craniata</taxon>
        <taxon>Vertebrata</taxon>
        <taxon>Euteleostomi</taxon>
        <taxon>Mammalia</taxon>
        <taxon>Eutheria</taxon>
        <taxon>Euarchontoglires</taxon>
        <taxon>Primates</taxon>
        <taxon>Haplorrhini</taxon>
        <taxon>Catarrhini</taxon>
        <taxon>Hominidae</taxon>
        <taxon>Homo</taxon>
    </lineage>
</organism>
<sequence length="234" mass="27213">MSETSFNLISEKCDILSILRDHPENRIYRRKIEELSKRFTAIRKTKGDGNCFYRALGYSYLESLLGKSREIFKFKERVLQTPNDLLAAGFEEHKFRNFFNAFYSVVELVEKDGSVSSLLKVFNDQSASDHIVQFLRLLTSAFIRNRADFFRHFIDEEMDIKDFCTHEVEPMATECDHIQITALSQALSIALQVEYVDEMDTALNHHVFPEAATPSVYLLYKTSHYNILYAADKH</sequence>
<gene>
    <name type="primary">OTUB2</name>
    <name type="synonym">C14orf137</name>
    <name type="synonym">OTB2</name>
    <name type="synonym">OTU2</name>
</gene>
<proteinExistence type="evidence at protein level"/>
<accession>Q96DC9</accession>
<accession>Q6IA10</accession>
<accession>Q9H6T1</accession>
<comment type="function">
    <text evidence="2 4 5">Hydrolase that can remove conjugated ubiquitin from proteins in vitro and may therefore play an important regulatory role at the level of protein turnover by preventing degradation. Mediates deubiquitination of 'Lys-11'-,'Lys-48'- and 'Lys-63'-linked polyubiquitin chains, with a preference for 'Lys-63'-linked polyubiquitin chains.</text>
</comment>
<comment type="catalytic activity">
    <reaction evidence="5">
        <text>Thiol-dependent hydrolysis of ester, thioester, amide, peptide and isopeptide bonds formed by the C-terminal Gly of ubiquitin (a 76-residue protein attached to proteins as an intracellular targeting signal).</text>
        <dbReference type="EC" id="3.4.19.12"/>
    </reaction>
</comment>
<comment type="interaction">
    <interactant intactId="EBI-746259">
        <id>Q96DC9</id>
    </interactant>
    <interactant intactId="EBI-2875665">
        <id>Q96B67</id>
        <label>ARRDC3</label>
    </interactant>
    <organismsDiffer>false</organismsDiffer>
    <experiments>8</experiments>
</comment>
<comment type="interaction">
    <interactant intactId="EBI-746259">
        <id>Q96DC9</id>
    </interactant>
    <interactant intactId="EBI-946046">
        <id>P54252</id>
        <label>ATXN3</label>
    </interactant>
    <organismsDiffer>false</organismsDiffer>
    <experiments>9</experiments>
</comment>
<comment type="interaction">
    <interactant intactId="EBI-746259">
        <id>Q96DC9</id>
    </interactant>
    <interactant intactId="EBI-2876678">
        <id>Q9H305</id>
        <label>CDIP1</label>
    </interactant>
    <organismsDiffer>false</organismsDiffer>
    <experiments>3</experiments>
</comment>
<comment type="interaction">
    <interactant intactId="EBI-746259">
        <id>Q96DC9</id>
    </interactant>
    <interactant intactId="EBI-358410">
        <id>Q16630</id>
        <label>CPSF6</label>
    </interactant>
    <organismsDiffer>false</organismsDiffer>
    <experiments>3</experiments>
</comment>
<comment type="interaction">
    <interactant intactId="EBI-746259">
        <id>Q96DC9</id>
    </interactant>
    <interactant intactId="EBI-724310">
        <id>Q15038</id>
        <label>DAZAP2</label>
    </interactant>
    <organismsDiffer>false</organismsDiffer>
    <experiments>5</experiments>
</comment>
<comment type="interaction">
    <interactant intactId="EBI-746259">
        <id>Q96DC9</id>
    </interactant>
    <interactant intactId="EBI-7957930">
        <id>Q92567</id>
        <label>FAM168A</label>
    </interactant>
    <organismsDiffer>false</organismsDiffer>
    <experiments>5</experiments>
</comment>
<comment type="interaction">
    <interactant intactId="EBI-746259">
        <id>Q96DC9</id>
    </interactant>
    <interactant intactId="EBI-11978259">
        <id>Q92567-2</id>
        <label>FAM168A</label>
    </interactant>
    <organismsDiffer>false</organismsDiffer>
    <experiments>3</experiments>
</comment>
<comment type="interaction">
    <interactant intactId="EBI-746259">
        <id>Q96DC9</id>
    </interactant>
    <interactant intactId="EBI-741037">
        <id>Q9BRK4</id>
        <label>LZTS2</label>
    </interactant>
    <organismsDiffer>false</organismsDiffer>
    <experiments>3</experiments>
</comment>
<comment type="interaction">
    <interactant intactId="EBI-746259">
        <id>Q96DC9</id>
    </interactant>
    <interactant intactId="EBI-2340316">
        <id>O15344</id>
        <label>MID1</label>
    </interactant>
    <organismsDiffer>false</organismsDiffer>
    <experiments>3</experiments>
</comment>
<comment type="interaction">
    <interactant intactId="EBI-746259">
        <id>Q96DC9</id>
    </interactant>
    <interactant intactId="EBI-10172526">
        <id>Q9UJV3-2</id>
        <label>MID2</label>
    </interactant>
    <organismsDiffer>false</organismsDiffer>
    <experiments>3</experiments>
</comment>
<comment type="interaction">
    <interactant intactId="EBI-746259">
        <id>Q96DC9</id>
    </interactant>
    <interactant intactId="EBI-373524">
        <id>Q9UHC7</id>
        <label>MKRN1</label>
    </interactant>
    <organismsDiffer>false</organismsDiffer>
    <experiments>3</experiments>
</comment>
<comment type="interaction">
    <interactant intactId="EBI-746259">
        <id>Q96DC9</id>
    </interactant>
    <interactant intactId="EBI-4402464">
        <id>Q53GA4</id>
        <label>PHLDA2</label>
    </interactant>
    <organismsDiffer>false</organismsDiffer>
    <experiments>3</experiments>
</comment>
<comment type="interaction">
    <interactant intactId="EBI-746259">
        <id>Q96DC9</id>
    </interactant>
    <interactant intactId="EBI-373552">
        <id>Q96CS7</id>
        <label>PLEKHB2</label>
    </interactant>
    <organismsDiffer>false</organismsDiffer>
    <experiments>3</experiments>
</comment>
<comment type="interaction">
    <interactant intactId="EBI-746259">
        <id>Q96DC9</id>
    </interactant>
    <interactant intactId="EBI-13318883">
        <id>Q969W9-2</id>
        <label>PMEPA1</label>
    </interactant>
    <organismsDiffer>false</organismsDiffer>
    <experiments>3</experiments>
</comment>
<comment type="interaction">
    <interactant intactId="EBI-746259">
        <id>Q96DC9</id>
    </interactant>
    <interactant intactId="EBI-307352">
        <id>Q04864</id>
        <label>REL</label>
    </interactant>
    <organismsDiffer>false</organismsDiffer>
    <experiments>3</experiments>
</comment>
<comment type="interaction">
    <interactant intactId="EBI-746259">
        <id>Q96DC9</id>
    </interactant>
    <interactant intactId="EBI-10829018">
        <id>Q04864-2</id>
        <label>REL</label>
    </interactant>
    <organismsDiffer>false</organismsDiffer>
    <experiments>3</experiments>
</comment>
<comment type="interaction">
    <interactant intactId="EBI-746259">
        <id>Q96DC9</id>
    </interactant>
    <interactant intactId="EBI-747107">
        <id>Q8IUQ4</id>
        <label>SIAH1</label>
    </interactant>
    <organismsDiffer>false</organismsDiffer>
    <experiments>3</experiments>
</comment>
<comment type="interaction">
    <interactant intactId="EBI-746259">
        <id>Q96DC9</id>
    </interactant>
    <interactant intactId="EBI-2643803">
        <id>Q8N0X7</id>
        <label>SPART</label>
    </interactant>
    <organismsDiffer>false</organismsDiffer>
    <experiments>3</experiments>
</comment>
<comment type="interaction">
    <interactant intactId="EBI-746259">
        <id>Q96DC9</id>
    </interactant>
    <interactant intactId="EBI-11952721">
        <id>Q05BL1</id>
        <label>TP53BP2</label>
    </interactant>
    <organismsDiffer>false</organismsDiffer>
    <experiments>3</experiments>
</comment>
<comment type="interaction">
    <interactant intactId="EBI-746259">
        <id>Q96DC9</id>
    </interactant>
    <interactant intactId="EBI-10175039">
        <id>Q13625-3</id>
        <label>TP53BP2</label>
    </interactant>
    <organismsDiffer>false</organismsDiffer>
    <experiments>3</experiments>
</comment>
<comment type="interaction">
    <interactant intactId="EBI-746259">
        <id>Q96DC9</id>
    </interactant>
    <interactant intactId="EBI-359276">
        <id>Q9Y4K3</id>
        <label>TRAF6</label>
    </interactant>
    <organismsDiffer>false</organismsDiffer>
    <experiments>3</experiments>
</comment>
<comment type="interaction">
    <interactant intactId="EBI-746259">
        <id>Q96DC9</id>
    </interactant>
    <interactant intactId="EBI-2130429">
        <id>Q9BYV2</id>
        <label>TRIM54</label>
    </interactant>
    <organismsDiffer>false</organismsDiffer>
    <experiments>4</experiments>
</comment>
<comment type="interaction">
    <interactant intactId="EBI-746259">
        <id>Q96DC9</id>
    </interactant>
    <interactant intactId="EBI-2340370">
        <id>Q9BZR9</id>
        <label>TRIM8</label>
    </interactant>
    <organismsDiffer>false</organismsDiffer>
    <experiments>7</experiments>
</comment>
<comment type="interaction">
    <interactant intactId="EBI-25973449">
        <id>Q96DC9-2</id>
    </interactant>
    <interactant intactId="EBI-946046">
        <id>P54252</id>
        <label>ATXN3</label>
    </interactant>
    <organismsDiffer>false</organismsDiffer>
    <experiments>9</experiments>
</comment>
<comment type="alternative products">
    <event type="alternative splicing"/>
    <isoform>
        <id>Q96DC9-1</id>
        <name>1</name>
        <sequence type="displayed"/>
    </isoform>
    <isoform>
        <id>Q96DC9-2</id>
        <name>2</name>
        <sequence type="described" ref="VSP_009465"/>
    </isoform>
</comment>
<comment type="tissue specificity">
    <text evidence="2">Widely expressed. Expressed at higher level in brain.</text>
</comment>
<comment type="miscellaneous">
    <text evidence="9">In the structure described by PubMed:15258613, the Asp-48 active site of the catalytic triad is located too far to interact directly with the active site His-224. A possible explanation is that OTUB2 is in inactive conformation in absence of ubiquitin and a conformation change may move Asp-48 in the proximity of His-224 in presence of ubiquitin substrate.</text>
</comment>
<comment type="similarity">
    <text evidence="7">Belongs to the peptidase C65 family.</text>
</comment>
<keyword id="KW-0002">3D-structure</keyword>
<keyword id="KW-0025">Alternative splicing</keyword>
<keyword id="KW-0378">Hydrolase</keyword>
<keyword id="KW-0645">Protease</keyword>
<keyword id="KW-1267">Proteomics identification</keyword>
<keyword id="KW-1185">Reference proteome</keyword>
<keyword id="KW-0788">Thiol protease</keyword>
<keyword id="KW-0833">Ubl conjugation pathway</keyword>
<dbReference type="EC" id="3.4.19.12" evidence="5"/>
<dbReference type="EMBL" id="AY177201">
    <property type="protein sequence ID" value="AAO27703.1"/>
    <property type="molecule type" value="mRNA"/>
</dbReference>
<dbReference type="EMBL" id="AK025569">
    <property type="protein sequence ID" value="BAB15172.1"/>
    <property type="molecule type" value="mRNA"/>
</dbReference>
<dbReference type="EMBL" id="CR457345">
    <property type="protein sequence ID" value="CAG33626.1"/>
    <property type="molecule type" value="mRNA"/>
</dbReference>
<dbReference type="EMBL" id="AL079302">
    <property type="status" value="NOT_ANNOTATED_CDS"/>
    <property type="molecule type" value="Genomic_DNA"/>
</dbReference>
<dbReference type="EMBL" id="BC009615">
    <property type="protein sequence ID" value="AAH09615.1"/>
    <property type="molecule type" value="mRNA"/>
</dbReference>
<dbReference type="EMBL" id="BC068058">
    <property type="protein sequence ID" value="AAH68058.1"/>
    <property type="molecule type" value="mRNA"/>
</dbReference>
<dbReference type="CCDS" id="CCDS9917.1">
    <molecule id="Q96DC9-1"/>
</dbReference>
<dbReference type="RefSeq" id="NP_075601.1">
    <molecule id="Q96DC9-1"/>
    <property type="nucleotide sequence ID" value="NM_023112.4"/>
</dbReference>
<dbReference type="PDB" id="1TFF">
    <property type="method" value="X-ray"/>
    <property type="resolution" value="2.10 A"/>
    <property type="chains" value="A=1-234"/>
</dbReference>
<dbReference type="PDB" id="4FJV">
    <property type="method" value="X-ray"/>
    <property type="resolution" value="2.05 A"/>
    <property type="chains" value="A/C=1-234"/>
</dbReference>
<dbReference type="PDB" id="5QIO">
    <property type="method" value="X-ray"/>
    <property type="resolution" value="1.46 A"/>
    <property type="chains" value="A=6-230"/>
</dbReference>
<dbReference type="PDB" id="5QIP">
    <property type="method" value="X-ray"/>
    <property type="resolution" value="1.63 A"/>
    <property type="chains" value="A=6-230"/>
</dbReference>
<dbReference type="PDB" id="5QIQ">
    <property type="method" value="X-ray"/>
    <property type="resolution" value="1.44 A"/>
    <property type="chains" value="A=6-230"/>
</dbReference>
<dbReference type="PDB" id="5QIR">
    <property type="method" value="X-ray"/>
    <property type="resolution" value="1.43 A"/>
    <property type="chains" value="A=6-230"/>
</dbReference>
<dbReference type="PDB" id="5QIS">
    <property type="method" value="X-ray"/>
    <property type="resolution" value="1.53 A"/>
    <property type="chains" value="A=6-230"/>
</dbReference>
<dbReference type="PDB" id="5QIT">
    <property type="method" value="X-ray"/>
    <property type="resolution" value="1.46 A"/>
    <property type="chains" value="A=6-230"/>
</dbReference>
<dbReference type="PDB" id="5QIU">
    <property type="method" value="X-ray"/>
    <property type="resolution" value="1.56 A"/>
    <property type="chains" value="A=6-230"/>
</dbReference>
<dbReference type="PDB" id="5QIV">
    <property type="method" value="X-ray"/>
    <property type="resolution" value="1.39 A"/>
    <property type="chains" value="A=6-230"/>
</dbReference>
<dbReference type="PDB" id="5QIW">
    <property type="method" value="X-ray"/>
    <property type="resolution" value="1.71 A"/>
    <property type="chains" value="A=6-230"/>
</dbReference>
<dbReference type="PDB" id="5QIX">
    <property type="method" value="X-ray"/>
    <property type="resolution" value="1.39 A"/>
    <property type="chains" value="A=6-230"/>
</dbReference>
<dbReference type="PDB" id="5QIY">
    <property type="method" value="X-ray"/>
    <property type="resolution" value="1.58 A"/>
    <property type="chains" value="A=6-230"/>
</dbReference>
<dbReference type="PDB" id="5QIZ">
    <property type="method" value="X-ray"/>
    <property type="resolution" value="1.63 A"/>
    <property type="chains" value="A=6-230"/>
</dbReference>
<dbReference type="PDB" id="8CMS">
    <property type="method" value="X-ray"/>
    <property type="resolution" value="1.77 A"/>
    <property type="chains" value="AAA=1-234"/>
</dbReference>
<dbReference type="PDBsum" id="1TFF"/>
<dbReference type="PDBsum" id="4FJV"/>
<dbReference type="PDBsum" id="5QIO"/>
<dbReference type="PDBsum" id="5QIP"/>
<dbReference type="PDBsum" id="5QIQ"/>
<dbReference type="PDBsum" id="5QIR"/>
<dbReference type="PDBsum" id="5QIS"/>
<dbReference type="PDBsum" id="5QIT"/>
<dbReference type="PDBsum" id="5QIU"/>
<dbReference type="PDBsum" id="5QIV"/>
<dbReference type="PDBsum" id="5QIW"/>
<dbReference type="PDBsum" id="5QIX"/>
<dbReference type="PDBsum" id="5QIY"/>
<dbReference type="PDBsum" id="5QIZ"/>
<dbReference type="PDBsum" id="8CMS"/>
<dbReference type="SMR" id="Q96DC9"/>
<dbReference type="BioGRID" id="122461">
    <property type="interactions" value="108"/>
</dbReference>
<dbReference type="FunCoup" id="Q96DC9">
    <property type="interactions" value="677"/>
</dbReference>
<dbReference type="IntAct" id="Q96DC9">
    <property type="interactions" value="42"/>
</dbReference>
<dbReference type="MINT" id="Q96DC9"/>
<dbReference type="STRING" id="9606.ENSP00000203664"/>
<dbReference type="BindingDB" id="Q96DC9"/>
<dbReference type="ChEMBL" id="CHEMBL4630847"/>
<dbReference type="MEROPS" id="C65.002"/>
<dbReference type="GlyGen" id="Q96DC9">
    <property type="glycosylation" value="2 sites, 1 O-linked glycan (1 site)"/>
</dbReference>
<dbReference type="iPTMnet" id="Q96DC9"/>
<dbReference type="PhosphoSitePlus" id="Q96DC9"/>
<dbReference type="BioMuta" id="OTUB2"/>
<dbReference type="DMDM" id="44888285"/>
<dbReference type="jPOST" id="Q96DC9"/>
<dbReference type="MassIVE" id="Q96DC9"/>
<dbReference type="PaxDb" id="9606-ENSP00000203664"/>
<dbReference type="PeptideAtlas" id="Q96DC9"/>
<dbReference type="ProteomicsDB" id="76278">
    <molecule id="Q96DC9-1"/>
</dbReference>
<dbReference type="ProteomicsDB" id="76279">
    <molecule id="Q96DC9-2"/>
</dbReference>
<dbReference type="Pumba" id="Q96DC9"/>
<dbReference type="Antibodypedia" id="103">
    <property type="antibodies" value="418 antibodies from 32 providers"/>
</dbReference>
<dbReference type="CPTC" id="Q96DC9">
    <property type="antibodies" value="2 antibodies"/>
</dbReference>
<dbReference type="DNASU" id="78990"/>
<dbReference type="Ensembl" id="ENST00000203664.10">
    <molecule id="Q96DC9-1"/>
    <property type="protein sequence ID" value="ENSP00000203664.5"/>
    <property type="gene ID" value="ENSG00000089723.10"/>
</dbReference>
<dbReference type="Ensembl" id="ENST00000553723.1">
    <molecule id="Q96DC9-2"/>
    <property type="protein sequence ID" value="ENSP00000451283.1"/>
    <property type="gene ID" value="ENSG00000089723.10"/>
</dbReference>
<dbReference type="Ensembl" id="ENST00000617748.3">
    <molecule id="Q96DC9-1"/>
    <property type="protein sequence ID" value="ENSP00000478628.1"/>
    <property type="gene ID" value="ENSG00000277276.3"/>
</dbReference>
<dbReference type="Ensembl" id="ENST00000628711.1">
    <molecule id="Q96DC9-2"/>
    <property type="protein sequence ID" value="ENSP00000487491.1"/>
    <property type="gene ID" value="ENSG00000277276.3"/>
</dbReference>
<dbReference type="GeneID" id="78990"/>
<dbReference type="KEGG" id="hsa:78990"/>
<dbReference type="MANE-Select" id="ENST00000203664.10">
    <property type="protein sequence ID" value="ENSP00000203664.5"/>
    <property type="RefSeq nucleotide sequence ID" value="NM_023112.4"/>
    <property type="RefSeq protein sequence ID" value="NP_075601.1"/>
</dbReference>
<dbReference type="UCSC" id="uc001ych.5">
    <molecule id="Q96DC9-1"/>
    <property type="organism name" value="human"/>
</dbReference>
<dbReference type="AGR" id="HGNC:20351"/>
<dbReference type="CTD" id="78990"/>
<dbReference type="DisGeNET" id="78990"/>
<dbReference type="GeneCards" id="OTUB2"/>
<dbReference type="HGNC" id="HGNC:20351">
    <property type="gene designation" value="OTUB2"/>
</dbReference>
<dbReference type="HPA" id="ENSG00000089723">
    <property type="expression patterns" value="Group enriched (esophagus, skin, testis)"/>
</dbReference>
<dbReference type="MIM" id="608338">
    <property type="type" value="gene"/>
</dbReference>
<dbReference type="neXtProt" id="NX_Q96DC9"/>
<dbReference type="OpenTargets" id="ENSG00000089723"/>
<dbReference type="PharmGKB" id="PA134861658"/>
<dbReference type="VEuPathDB" id="HostDB:ENSG00000089723"/>
<dbReference type="eggNOG" id="KOG3991">
    <property type="taxonomic scope" value="Eukaryota"/>
</dbReference>
<dbReference type="GeneTree" id="ENSGT00390000006979"/>
<dbReference type="HOGENOM" id="CLU_014832_3_2_1"/>
<dbReference type="InParanoid" id="Q96DC9"/>
<dbReference type="OMA" id="KVYCRQE"/>
<dbReference type="OrthoDB" id="18915at2759"/>
<dbReference type="PAN-GO" id="Q96DC9">
    <property type="GO annotations" value="8 GO annotations based on evolutionary models"/>
</dbReference>
<dbReference type="PhylomeDB" id="Q96DC9"/>
<dbReference type="TreeFam" id="TF314145"/>
<dbReference type="PathwayCommons" id="Q96DC9"/>
<dbReference type="Reactome" id="R-HSA-5689896">
    <property type="pathway name" value="Ovarian tumor domain proteases"/>
</dbReference>
<dbReference type="SignaLink" id="Q96DC9"/>
<dbReference type="BioGRID-ORCS" id="78990">
    <property type="hits" value="7 hits in 1186 CRISPR screens"/>
</dbReference>
<dbReference type="ChiTaRS" id="OTUB2">
    <property type="organism name" value="human"/>
</dbReference>
<dbReference type="EvolutionaryTrace" id="Q96DC9"/>
<dbReference type="GeneWiki" id="OTUB2"/>
<dbReference type="GenomeRNAi" id="78990"/>
<dbReference type="Pharos" id="Q96DC9">
    <property type="development level" value="Tbio"/>
</dbReference>
<dbReference type="PRO" id="PR:Q96DC9"/>
<dbReference type="Proteomes" id="UP000005640">
    <property type="component" value="Chromosome 14"/>
</dbReference>
<dbReference type="RNAct" id="Q96DC9">
    <property type="molecule type" value="protein"/>
</dbReference>
<dbReference type="Bgee" id="ENSG00000089723">
    <property type="expression patterns" value="Expressed in male germ line stem cell (sensu Vertebrata) in testis and 102 other cell types or tissues"/>
</dbReference>
<dbReference type="GO" id="GO:0005634">
    <property type="term" value="C:nucleus"/>
    <property type="evidence" value="ECO:0007005"/>
    <property type="project" value="UniProtKB"/>
</dbReference>
<dbReference type="GO" id="GO:0004843">
    <property type="term" value="F:cysteine-type deubiquitinase activity"/>
    <property type="evidence" value="ECO:0000314"/>
    <property type="project" value="UniProtKB"/>
</dbReference>
<dbReference type="GO" id="GO:0043130">
    <property type="term" value="F:ubiquitin binding"/>
    <property type="evidence" value="ECO:0000318"/>
    <property type="project" value="GO_Central"/>
</dbReference>
<dbReference type="GO" id="GO:0016579">
    <property type="term" value="P:protein deubiquitination"/>
    <property type="evidence" value="ECO:0000315"/>
    <property type="project" value="UniProtKB"/>
</dbReference>
<dbReference type="GO" id="GO:0035871">
    <property type="term" value="P:protein K11-linked deubiquitination"/>
    <property type="evidence" value="ECO:0000314"/>
    <property type="project" value="UniProtKB"/>
</dbReference>
<dbReference type="GO" id="GO:0071108">
    <property type="term" value="P:protein K48-linked deubiquitination"/>
    <property type="evidence" value="ECO:0000314"/>
    <property type="project" value="UniProtKB"/>
</dbReference>
<dbReference type="GO" id="GO:0070536">
    <property type="term" value="P:protein K63-linked deubiquitination"/>
    <property type="evidence" value="ECO:0000314"/>
    <property type="project" value="UniProtKB"/>
</dbReference>
<dbReference type="GO" id="GO:0006508">
    <property type="term" value="P:proteolysis"/>
    <property type="evidence" value="ECO:0007669"/>
    <property type="project" value="UniProtKB-KW"/>
</dbReference>
<dbReference type="CDD" id="cd22764">
    <property type="entry name" value="OTUB2"/>
    <property type="match status" value="1"/>
</dbReference>
<dbReference type="FunFam" id="1.20.1300.20:FF:000001">
    <property type="entry name" value="Ubiquitin thioesterase OTUB1"/>
    <property type="match status" value="1"/>
</dbReference>
<dbReference type="Gene3D" id="3.30.200.60">
    <property type="entry name" value="Peptidase C65 Otubain, subdomain 1"/>
    <property type="match status" value="1"/>
</dbReference>
<dbReference type="Gene3D" id="1.20.1300.20">
    <property type="entry name" value="Peptidase C65 Otubain, subdomain 2"/>
    <property type="match status" value="1"/>
</dbReference>
<dbReference type="InterPro" id="IPR003323">
    <property type="entry name" value="OTU_dom"/>
</dbReference>
<dbReference type="InterPro" id="IPR016615">
    <property type="entry name" value="Otubain"/>
</dbReference>
<dbReference type="InterPro" id="IPR038765">
    <property type="entry name" value="Papain-like_cys_pep_sf"/>
</dbReference>
<dbReference type="InterPro" id="IPR019400">
    <property type="entry name" value="Peptidase_C65_otubain"/>
</dbReference>
<dbReference type="InterPro" id="IPR042468">
    <property type="entry name" value="Peptidase_C65_otubain_sub1"/>
</dbReference>
<dbReference type="InterPro" id="IPR042467">
    <property type="entry name" value="Peptidase_C65_otubain_sub2"/>
</dbReference>
<dbReference type="PANTHER" id="PTHR12931:SF3">
    <property type="entry name" value="UBIQUITIN THIOESTERASE OTUB2"/>
    <property type="match status" value="1"/>
</dbReference>
<dbReference type="PANTHER" id="PTHR12931">
    <property type="entry name" value="UBIQUITIN THIOLESTERASE PROTEIN OTUB"/>
    <property type="match status" value="1"/>
</dbReference>
<dbReference type="Pfam" id="PF10275">
    <property type="entry name" value="Peptidase_C65"/>
    <property type="match status" value="1"/>
</dbReference>
<dbReference type="PIRSF" id="PIRSF013503">
    <property type="entry name" value="Ubiquitin_thioesterase_Otubain"/>
    <property type="match status" value="1"/>
</dbReference>
<dbReference type="SUPFAM" id="SSF54001">
    <property type="entry name" value="Cysteine proteinases"/>
    <property type="match status" value="1"/>
</dbReference>
<dbReference type="PROSITE" id="PS50802">
    <property type="entry name" value="OTU"/>
    <property type="match status" value="1"/>
</dbReference>
<name>OTUB2_HUMAN</name>
<reference key="1">
    <citation type="journal article" date="2003" name="EMBO Rep.">
        <title>Otubains: a new family of cysteine proteases in the ubiquitin pathway.</title>
        <authorList>
            <person name="Balakirev M.Y."/>
            <person name="Tcherniuk S.O."/>
            <person name="Jaquinod M."/>
            <person name="Chroboczek J."/>
        </authorList>
    </citation>
    <scope>NUCLEOTIDE SEQUENCE [MRNA] (ISOFORM 1)</scope>
    <scope>IDENTIFICATION BY MASS SPECTROMETRY</scope>
    <scope>FUNCTION</scope>
    <scope>TISSUE SPECIFICITY</scope>
    <scope>MUTAGENESIS OF CYS-51</scope>
    <source>
        <tissue>Cervix carcinoma</tissue>
    </source>
</reference>
<reference key="2">
    <citation type="journal article" date="2004" name="Nat. Genet.">
        <title>Complete sequencing and characterization of 21,243 full-length human cDNAs.</title>
        <authorList>
            <person name="Ota T."/>
            <person name="Suzuki Y."/>
            <person name="Nishikawa T."/>
            <person name="Otsuki T."/>
            <person name="Sugiyama T."/>
            <person name="Irie R."/>
            <person name="Wakamatsu A."/>
            <person name="Hayashi K."/>
            <person name="Sato H."/>
            <person name="Nagai K."/>
            <person name="Kimura K."/>
            <person name="Makita H."/>
            <person name="Sekine M."/>
            <person name="Obayashi M."/>
            <person name="Nishi T."/>
            <person name="Shibahara T."/>
            <person name="Tanaka T."/>
            <person name="Ishii S."/>
            <person name="Yamamoto J."/>
            <person name="Saito K."/>
            <person name="Kawai Y."/>
            <person name="Isono Y."/>
            <person name="Nakamura Y."/>
            <person name="Nagahari K."/>
            <person name="Murakami K."/>
            <person name="Yasuda T."/>
            <person name="Iwayanagi T."/>
            <person name="Wagatsuma M."/>
            <person name="Shiratori A."/>
            <person name="Sudo H."/>
            <person name="Hosoiri T."/>
            <person name="Kaku Y."/>
            <person name="Kodaira H."/>
            <person name="Kondo H."/>
            <person name="Sugawara M."/>
            <person name="Takahashi M."/>
            <person name="Kanda K."/>
            <person name="Yokoi T."/>
            <person name="Furuya T."/>
            <person name="Kikkawa E."/>
            <person name="Omura Y."/>
            <person name="Abe K."/>
            <person name="Kamihara K."/>
            <person name="Katsuta N."/>
            <person name="Sato K."/>
            <person name="Tanikawa M."/>
            <person name="Yamazaki M."/>
            <person name="Ninomiya K."/>
            <person name="Ishibashi T."/>
            <person name="Yamashita H."/>
            <person name="Murakawa K."/>
            <person name="Fujimori K."/>
            <person name="Tanai H."/>
            <person name="Kimata M."/>
            <person name="Watanabe M."/>
            <person name="Hiraoka S."/>
            <person name="Chiba Y."/>
            <person name="Ishida S."/>
            <person name="Ono Y."/>
            <person name="Takiguchi S."/>
            <person name="Watanabe S."/>
            <person name="Yosida M."/>
            <person name="Hotuta T."/>
            <person name="Kusano J."/>
            <person name="Kanehori K."/>
            <person name="Takahashi-Fujii A."/>
            <person name="Hara H."/>
            <person name="Tanase T.-O."/>
            <person name="Nomura Y."/>
            <person name="Togiya S."/>
            <person name="Komai F."/>
            <person name="Hara R."/>
            <person name="Takeuchi K."/>
            <person name="Arita M."/>
            <person name="Imose N."/>
            <person name="Musashino K."/>
            <person name="Yuuki H."/>
            <person name="Oshima A."/>
            <person name="Sasaki N."/>
            <person name="Aotsuka S."/>
            <person name="Yoshikawa Y."/>
            <person name="Matsunawa H."/>
            <person name="Ichihara T."/>
            <person name="Shiohata N."/>
            <person name="Sano S."/>
            <person name="Moriya S."/>
            <person name="Momiyama H."/>
            <person name="Satoh N."/>
            <person name="Takami S."/>
            <person name="Terashima Y."/>
            <person name="Suzuki O."/>
            <person name="Nakagawa S."/>
            <person name="Senoh A."/>
            <person name="Mizoguchi H."/>
            <person name="Goto Y."/>
            <person name="Shimizu F."/>
            <person name="Wakebe H."/>
            <person name="Hishigaki H."/>
            <person name="Watanabe T."/>
            <person name="Sugiyama A."/>
            <person name="Takemoto M."/>
            <person name="Kawakami B."/>
            <person name="Yamazaki M."/>
            <person name="Watanabe K."/>
            <person name="Kumagai A."/>
            <person name="Itakura S."/>
            <person name="Fukuzumi Y."/>
            <person name="Fujimori Y."/>
            <person name="Komiyama M."/>
            <person name="Tashiro H."/>
            <person name="Tanigami A."/>
            <person name="Fujiwara T."/>
            <person name="Ono T."/>
            <person name="Yamada K."/>
            <person name="Fujii Y."/>
            <person name="Ozaki K."/>
            <person name="Hirao M."/>
            <person name="Ohmori Y."/>
            <person name="Kawabata A."/>
            <person name="Hikiji T."/>
            <person name="Kobatake N."/>
            <person name="Inagaki H."/>
            <person name="Ikema Y."/>
            <person name="Okamoto S."/>
            <person name="Okitani R."/>
            <person name="Kawakami T."/>
            <person name="Noguchi S."/>
            <person name="Itoh T."/>
            <person name="Shigeta K."/>
            <person name="Senba T."/>
            <person name="Matsumura K."/>
            <person name="Nakajima Y."/>
            <person name="Mizuno T."/>
            <person name="Morinaga M."/>
            <person name="Sasaki M."/>
            <person name="Togashi T."/>
            <person name="Oyama M."/>
            <person name="Hata H."/>
            <person name="Watanabe M."/>
            <person name="Komatsu T."/>
            <person name="Mizushima-Sugano J."/>
            <person name="Satoh T."/>
            <person name="Shirai Y."/>
            <person name="Takahashi Y."/>
            <person name="Nakagawa K."/>
            <person name="Okumura K."/>
            <person name="Nagase T."/>
            <person name="Nomura N."/>
            <person name="Kikuchi H."/>
            <person name="Masuho Y."/>
            <person name="Yamashita R."/>
            <person name="Nakai K."/>
            <person name="Yada T."/>
            <person name="Nakamura Y."/>
            <person name="Ohara O."/>
            <person name="Isogai T."/>
            <person name="Sugano S."/>
        </authorList>
    </citation>
    <scope>NUCLEOTIDE SEQUENCE [LARGE SCALE MRNA] (ISOFORM 1)</scope>
</reference>
<reference key="3">
    <citation type="submission" date="2004-06" db="EMBL/GenBank/DDBJ databases">
        <title>Cloning of human full open reading frames in Gateway(TM) system entry vector (pDONR201).</title>
        <authorList>
            <person name="Ebert L."/>
            <person name="Schick M."/>
            <person name="Neubert P."/>
            <person name="Schatten R."/>
            <person name="Henze S."/>
            <person name="Korn B."/>
        </authorList>
    </citation>
    <scope>NUCLEOTIDE SEQUENCE [LARGE SCALE MRNA] (ISOFORM 1)</scope>
</reference>
<reference key="4">
    <citation type="journal article" date="2003" name="Nature">
        <title>The DNA sequence and analysis of human chromosome 14.</title>
        <authorList>
            <person name="Heilig R."/>
            <person name="Eckenberg R."/>
            <person name="Petit J.-L."/>
            <person name="Fonknechten N."/>
            <person name="Da Silva C."/>
            <person name="Cattolico L."/>
            <person name="Levy M."/>
            <person name="Barbe V."/>
            <person name="De Berardinis V."/>
            <person name="Ureta-Vidal A."/>
            <person name="Pelletier E."/>
            <person name="Vico V."/>
            <person name="Anthouard V."/>
            <person name="Rowen L."/>
            <person name="Madan A."/>
            <person name="Qin S."/>
            <person name="Sun H."/>
            <person name="Du H."/>
            <person name="Pepin K."/>
            <person name="Artiguenave F."/>
            <person name="Robert C."/>
            <person name="Cruaud C."/>
            <person name="Bruels T."/>
            <person name="Jaillon O."/>
            <person name="Friedlander L."/>
            <person name="Samson G."/>
            <person name="Brottier P."/>
            <person name="Cure S."/>
            <person name="Segurens B."/>
            <person name="Aniere F."/>
            <person name="Samain S."/>
            <person name="Crespeau H."/>
            <person name="Abbasi N."/>
            <person name="Aiach N."/>
            <person name="Boscus D."/>
            <person name="Dickhoff R."/>
            <person name="Dors M."/>
            <person name="Dubois I."/>
            <person name="Friedman C."/>
            <person name="Gouyvenoux M."/>
            <person name="James R."/>
            <person name="Madan A."/>
            <person name="Mairey-Estrada B."/>
            <person name="Mangenot S."/>
            <person name="Martins N."/>
            <person name="Menard M."/>
            <person name="Oztas S."/>
            <person name="Ratcliffe A."/>
            <person name="Shaffer T."/>
            <person name="Trask B."/>
            <person name="Vacherie B."/>
            <person name="Bellemere C."/>
            <person name="Belser C."/>
            <person name="Besnard-Gonnet M."/>
            <person name="Bartol-Mavel D."/>
            <person name="Boutard M."/>
            <person name="Briez-Silla S."/>
            <person name="Combette S."/>
            <person name="Dufosse-Laurent V."/>
            <person name="Ferron C."/>
            <person name="Lechaplais C."/>
            <person name="Louesse C."/>
            <person name="Muselet D."/>
            <person name="Magdelenat G."/>
            <person name="Pateau E."/>
            <person name="Petit E."/>
            <person name="Sirvain-Trukniewicz P."/>
            <person name="Trybou A."/>
            <person name="Vega-Czarny N."/>
            <person name="Bataille E."/>
            <person name="Bluet E."/>
            <person name="Bordelais I."/>
            <person name="Dubois M."/>
            <person name="Dumont C."/>
            <person name="Guerin T."/>
            <person name="Haffray S."/>
            <person name="Hammadi R."/>
            <person name="Muanga J."/>
            <person name="Pellouin V."/>
            <person name="Robert D."/>
            <person name="Wunderle E."/>
            <person name="Gauguet G."/>
            <person name="Roy A."/>
            <person name="Sainte-Marthe L."/>
            <person name="Verdier J."/>
            <person name="Verdier-Discala C."/>
            <person name="Hillier L.W."/>
            <person name="Fulton L."/>
            <person name="McPherson J."/>
            <person name="Matsuda F."/>
            <person name="Wilson R."/>
            <person name="Scarpelli C."/>
            <person name="Gyapay G."/>
            <person name="Wincker P."/>
            <person name="Saurin W."/>
            <person name="Quetier F."/>
            <person name="Waterston R."/>
            <person name="Hood L."/>
            <person name="Weissenbach J."/>
        </authorList>
    </citation>
    <scope>NUCLEOTIDE SEQUENCE [LARGE SCALE GENOMIC DNA]</scope>
</reference>
<reference key="5">
    <citation type="journal article" date="2004" name="Genome Res.">
        <title>The status, quality, and expansion of the NIH full-length cDNA project: the Mammalian Gene Collection (MGC).</title>
        <authorList>
            <consortium name="The MGC Project Team"/>
        </authorList>
    </citation>
    <scope>NUCLEOTIDE SEQUENCE [LARGE SCALE MRNA] (ISOFORMS 1 AND 2)</scope>
    <source>
        <tissue>Eye</tissue>
        <tissue>Lung</tissue>
    </source>
</reference>
<reference key="6">
    <citation type="journal article" date="2009" name="Biochem. J.">
        <title>Structural basis and specificity of human otubain 1-mediated deubiquitination.</title>
        <authorList>
            <person name="Edelmann M.J."/>
            <person name="Iphoefer A."/>
            <person name="Akutsu M."/>
            <person name="Altun M."/>
            <person name="di Gleria K."/>
            <person name="Kramer H.B."/>
            <person name="Fiebiger E."/>
            <person name="Dhe-Paganon S."/>
            <person name="Kessler B.M."/>
        </authorList>
    </citation>
    <scope>FUNCTION</scope>
    <scope>MUTAGENESIS OF GLY-47</scope>
</reference>
<reference key="7">
    <citation type="journal article" date="2013" name="Cell">
        <title>OTU deubiquitinases reveal mechanisms of linkage specificity and enable ubiquitin chain restriction analysis.</title>
        <authorList>
            <person name="Mevissen T.E."/>
            <person name="Hospenthal M.K."/>
            <person name="Geurink P.P."/>
            <person name="Elliott P.R."/>
            <person name="Akutsu M."/>
            <person name="Arnaudo N."/>
            <person name="Ekkebus R."/>
            <person name="Kulathu Y."/>
            <person name="Wauer T."/>
            <person name="El Oualid F."/>
            <person name="Freund S.M."/>
            <person name="Ovaa H."/>
            <person name="Komander D."/>
        </authorList>
    </citation>
    <scope>FUNCTION</scope>
    <scope>CATALYTIC ACTIVITY</scope>
</reference>
<reference key="8">
    <citation type="journal article" date="2004" name="EMBO Rep.">
        <title>Crystal structure of human otubain 2.</title>
        <authorList>
            <person name="Nanao M.H."/>
            <person name="Tcherniuk S.O."/>
            <person name="Chroboczek J."/>
            <person name="Dideberg O."/>
            <person name="Dessen A."/>
            <person name="Balakirev M.Y."/>
        </authorList>
    </citation>
    <scope>X-RAY CRYSTALLOGRAPHY (2.1 ANGSTROMS)</scope>
    <scope>MUTAGENESIS OF ASN-226</scope>
</reference>